<gene>
    <name evidence="5" type="primary">takP</name>
    <name evidence="7" type="synonym">smoM</name>
    <name type="ordered locus">RHOS4_17040</name>
    <name type="ORF">RSP_0097</name>
</gene>
<name>TAKP_CERS4</name>
<keyword id="KW-0002">3D-structure</keyword>
<keyword id="KW-0479">Metal-binding</keyword>
<keyword id="KW-0574">Periplasm</keyword>
<keyword id="KW-0670">Pyruvate</keyword>
<keyword id="KW-1185">Reference proteome</keyword>
<keyword id="KW-0732">Signal</keyword>
<keyword id="KW-0915">Sodium</keyword>
<keyword id="KW-0813">Transport</keyword>
<organism>
    <name type="scientific">Cereibacter sphaeroides (strain ATCC 17023 / DSM 158 / JCM 6121 / CCUG 31486 / LMG 2827 / NBRC 12203 / NCIMB 8253 / ATH 2.4.1.)</name>
    <name type="common">Rhodobacter sphaeroides</name>
    <dbReference type="NCBI Taxonomy" id="272943"/>
    <lineage>
        <taxon>Bacteria</taxon>
        <taxon>Pseudomonadati</taxon>
        <taxon>Pseudomonadota</taxon>
        <taxon>Alphaproteobacteria</taxon>
        <taxon>Rhodobacterales</taxon>
        <taxon>Paracoccaceae</taxon>
        <taxon>Cereibacter</taxon>
    </lineage>
</organism>
<accession>Q3J1R2</accession>
<sequence length="365" mass="39984">MDRRSFITKAAVGGAAASALAAPALAQSAPKVTWRLASSFPKSLDTIFGGAEVLSKMLSEATDGNFQIQVFSAGELVPGLQAADAVTEGTVECCHTVGYYYWGKDPTFALAAAVPFSLSARGINAWHYHGGGIDLYNEFLSQHNIVAFPGGNTGVQMGGWFRREINTVADMQGLKMRVGGFAGKVMERLGVVPQQIAGGDIYPALEKGTIDATEWVGPYDDEKLGFFKVAPYYYYPGWWEGGPTVHFMFNKSAYEGLTPTYQSLLRTACHAADANMLQLYDWKNPTAIKSLVAQGTQLRPFSPEILQACFEAANEVYAEMEASNPAFKKIWDSIKAFRSEHYTWAQIAEYNYDTFMMVQQNAGKL</sequence>
<dbReference type="EMBL" id="CP000143">
    <property type="protein sequence ID" value="ABA79272.1"/>
    <property type="molecule type" value="Genomic_DNA"/>
</dbReference>
<dbReference type="RefSeq" id="WP_011337992.1">
    <property type="nucleotide sequence ID" value="NC_007493.2"/>
</dbReference>
<dbReference type="RefSeq" id="YP_353173.1">
    <property type="nucleotide sequence ID" value="NC_007493.2"/>
</dbReference>
<dbReference type="PDB" id="2HZK">
    <property type="method" value="X-ray"/>
    <property type="resolution" value="1.70 A"/>
    <property type="chains" value="A/B/C/D=1-365"/>
</dbReference>
<dbReference type="PDB" id="2HZL">
    <property type="method" value="X-ray"/>
    <property type="resolution" value="1.40 A"/>
    <property type="chains" value="A/B=1-365"/>
</dbReference>
<dbReference type="PDBsum" id="2HZK"/>
<dbReference type="PDBsum" id="2HZL"/>
<dbReference type="SMR" id="Q3J1R2"/>
<dbReference type="STRING" id="272943.RSP_0097"/>
<dbReference type="MetOSite" id="Q3J1R2"/>
<dbReference type="EnsemblBacteria" id="ABA79272">
    <property type="protein sequence ID" value="ABA79272"/>
    <property type="gene ID" value="RSP_0097"/>
</dbReference>
<dbReference type="GeneID" id="3719929"/>
<dbReference type="KEGG" id="rsp:RSP_0097"/>
<dbReference type="PATRIC" id="fig|272943.9.peg.2037"/>
<dbReference type="eggNOG" id="COG4663">
    <property type="taxonomic scope" value="Bacteria"/>
</dbReference>
<dbReference type="OrthoDB" id="9780733at2"/>
<dbReference type="PhylomeDB" id="Q3J1R2"/>
<dbReference type="EvolutionaryTrace" id="Q3J1R2"/>
<dbReference type="PRO" id="PR:Q3J1R2"/>
<dbReference type="Proteomes" id="UP000002703">
    <property type="component" value="Chromosome 1"/>
</dbReference>
<dbReference type="GO" id="GO:0042597">
    <property type="term" value="C:periplasmic space"/>
    <property type="evidence" value="ECO:0007669"/>
    <property type="project" value="UniProtKB-SubCell"/>
</dbReference>
<dbReference type="GO" id="GO:0031317">
    <property type="term" value="C:tripartite ATP-independent periplasmic transporter complex"/>
    <property type="evidence" value="ECO:0000314"/>
    <property type="project" value="UniProtKB"/>
</dbReference>
<dbReference type="GO" id="GO:0046872">
    <property type="term" value="F:metal ion binding"/>
    <property type="evidence" value="ECO:0000314"/>
    <property type="project" value="UniProtKB"/>
</dbReference>
<dbReference type="GO" id="GO:0043177">
    <property type="term" value="F:organic acid binding"/>
    <property type="evidence" value="ECO:0000314"/>
    <property type="project" value="UniProtKB"/>
</dbReference>
<dbReference type="GO" id="GO:0042803">
    <property type="term" value="F:protein homodimerization activity"/>
    <property type="evidence" value="ECO:0000314"/>
    <property type="project" value="UniProtKB"/>
</dbReference>
<dbReference type="GO" id="GO:0046942">
    <property type="term" value="P:carboxylic acid transport"/>
    <property type="evidence" value="ECO:0000314"/>
    <property type="project" value="UniProtKB"/>
</dbReference>
<dbReference type="GO" id="GO:0055085">
    <property type="term" value="P:transmembrane transport"/>
    <property type="evidence" value="ECO:0007669"/>
    <property type="project" value="InterPro"/>
</dbReference>
<dbReference type="CDD" id="cd13682">
    <property type="entry name" value="PBP2_TRAP_alpha-ketoacid"/>
    <property type="match status" value="1"/>
</dbReference>
<dbReference type="FunFam" id="3.40.190.10:FF:000371">
    <property type="entry name" value="Alpha-keto acid-binding periplasmic protein TakP"/>
    <property type="match status" value="1"/>
</dbReference>
<dbReference type="Gene3D" id="3.40.190.170">
    <property type="entry name" value="Bacterial extracellular solute-binding protein, family 7"/>
    <property type="match status" value="1"/>
</dbReference>
<dbReference type="Gene3D" id="3.40.190.10">
    <property type="entry name" value="Periplasmic binding protein-like II"/>
    <property type="match status" value="1"/>
</dbReference>
<dbReference type="InterPro" id="IPR018389">
    <property type="entry name" value="DctP_fam"/>
</dbReference>
<dbReference type="InterPro" id="IPR026289">
    <property type="entry name" value="SBP_TakP-like"/>
</dbReference>
<dbReference type="InterPro" id="IPR041722">
    <property type="entry name" value="TakP/all3028"/>
</dbReference>
<dbReference type="InterPro" id="IPR006311">
    <property type="entry name" value="TAT_signal"/>
</dbReference>
<dbReference type="InterPro" id="IPR038404">
    <property type="entry name" value="TRAP_DctP_sf"/>
</dbReference>
<dbReference type="NCBIfam" id="NF037995">
    <property type="entry name" value="TRAP_S1"/>
    <property type="match status" value="1"/>
</dbReference>
<dbReference type="PANTHER" id="PTHR33376">
    <property type="match status" value="1"/>
</dbReference>
<dbReference type="PANTHER" id="PTHR33376:SF5">
    <property type="entry name" value="EXTRACYTOPLASMIC SOLUTE RECEPTOR PROTEIN"/>
    <property type="match status" value="1"/>
</dbReference>
<dbReference type="Pfam" id="PF03480">
    <property type="entry name" value="DctP"/>
    <property type="match status" value="1"/>
</dbReference>
<dbReference type="PIRSF" id="PIRSF039026">
    <property type="entry name" value="SiaP"/>
    <property type="match status" value="1"/>
</dbReference>
<dbReference type="PROSITE" id="PS51318">
    <property type="entry name" value="TAT"/>
    <property type="match status" value="1"/>
</dbReference>
<comment type="function">
    <text evidence="1 4">Part of the tripartite ATP-independent periplasmic (TRAP) transport system TakPQM involved in the uptake of alpha-keto acids. This protein specifically binds alpha-keto acids including pyruvate, oxobutyrate, oxovalerate and 4-methyl-2-oxovalerate. Ligand-binding affinity increases with the increasing chain length of the aliphatic backbone of the ligand. Is not able to bind alpha-ketoglutarate.</text>
</comment>
<comment type="subunit">
    <text evidence="1 4 5">Homodimer. The complex comprises the extracytoplasmic solute receptor protein TakP, and the two transmembrane proteins TakQ and TakM.</text>
</comment>
<comment type="subcellular location">
    <subcellularLocation>
        <location evidence="1">Periplasm</location>
    </subcellularLocation>
</comment>
<comment type="PTM">
    <text evidence="2">Predicted to be exported by the Tat system. The position of the signal peptide cleavage has not been experimentally proven.</text>
</comment>
<comment type="similarity">
    <text evidence="2">Belongs to the bacterial solute-binding protein 7 family.</text>
</comment>
<comment type="caution">
    <text evidence="6">Was originally (Ref.1) annotated as coding for a sorbitol/mannitol-binding protein based solely on its position in the genome close to the smo operon encoding known sorbitol/mannitol catabolic genes.</text>
</comment>
<proteinExistence type="evidence at protein level"/>
<reference evidence="7" key="1">
    <citation type="submission" date="2005-09" db="EMBL/GenBank/DDBJ databases">
        <title>Complete sequence of chromosome 1 of Rhodobacter sphaeroides 2.4.1.</title>
        <authorList>
            <person name="Copeland A."/>
            <person name="Lucas S."/>
            <person name="Lapidus A."/>
            <person name="Barry K."/>
            <person name="Detter J.C."/>
            <person name="Glavina T."/>
            <person name="Hammon N."/>
            <person name="Israni S."/>
            <person name="Pitluck S."/>
            <person name="Richardson P."/>
            <person name="Mackenzie C."/>
            <person name="Choudhary M."/>
            <person name="Larimer F."/>
            <person name="Hauser L.J."/>
            <person name="Land M."/>
            <person name="Donohue T.J."/>
            <person name="Kaplan S."/>
        </authorList>
    </citation>
    <scope>NUCLEOTIDE SEQUENCE [LARGE SCALE GENOMIC DNA]</scope>
    <source>
        <strain>ATCC 17023 / DSM 158 / JCM 6121 / CCUG 31486 / LMG 2827 / NBRC 12203 / NCIMB 8253 / ATH 2.4.1.</strain>
    </source>
</reference>
<reference evidence="6 8" key="2">
    <citation type="journal article" date="2007" name="BMC Struct. Biol.">
        <title>Crystal structures of an extracytoplasmic solute receptor from a TRAP transporter in its open and closed forms reveal a helix-swapped dimer requiring a cation for alpha-keto acid binding.</title>
        <authorList>
            <person name="Gonin S."/>
            <person name="Arnoux P."/>
            <person name="Pierru B."/>
            <person name="Lavergne J."/>
            <person name="Alonso B."/>
            <person name="Sabaty M."/>
            <person name="Pignol D."/>
        </authorList>
    </citation>
    <scope>X-RAY CRYSTALLOGRAPHY (1.40 ANGSTROMS) OF UNLIGANDED FORM AND IN COMPLEX WITH PYRUVATE AND SODIUM</scope>
    <scope>FUNCTION</scope>
    <scope>SUBUNIT</scope>
    <scope>SUBSTRATE SPECIFICITY</scope>
    <source>
        <strain evidence="4">ATCC 17023 / DSM 158 / JCM 6121 / CCUG 31486 / LMG 2827 / NBRC 12203 / NCIMB 8253 / ATH 2.4.1.</strain>
    </source>
</reference>
<evidence type="ECO:0000250" key="1">
    <source>
        <dbReference type="UniProtKB" id="P44542"/>
    </source>
</evidence>
<evidence type="ECO:0000255" key="2"/>
<evidence type="ECO:0000255" key="3">
    <source>
        <dbReference type="PROSITE-ProRule" id="PRU00648"/>
    </source>
</evidence>
<evidence type="ECO:0000269" key="4">
    <source>
    </source>
</evidence>
<evidence type="ECO:0000303" key="5">
    <source>
    </source>
</evidence>
<evidence type="ECO:0000305" key="6"/>
<evidence type="ECO:0000312" key="7">
    <source>
        <dbReference type="EMBL" id="ABA79272.1"/>
    </source>
</evidence>
<evidence type="ECO:0000312" key="8">
    <source>
        <dbReference type="PDB" id="2HZK"/>
    </source>
</evidence>
<evidence type="ECO:0007829" key="9">
    <source>
        <dbReference type="PDB" id="2HZK"/>
    </source>
</evidence>
<evidence type="ECO:0007829" key="10">
    <source>
        <dbReference type="PDB" id="2HZL"/>
    </source>
</evidence>
<protein>
    <recommendedName>
        <fullName evidence="1 5">Alpha-keto acid-binding periplasmic protein TakP</fullName>
    </recommendedName>
    <alternativeName>
        <fullName evidence="5">Extracytoplasmic solute receptor protein TakP</fullName>
    </alternativeName>
    <alternativeName>
        <fullName evidence="5">TRAP transporter alpha-keto acid-binding subunit P</fullName>
    </alternativeName>
    <alternativeName>
        <fullName evidence="7">TRAP-T family sorbitol/mannitol transporter, periplasmic binding protein, SmoM</fullName>
    </alternativeName>
</protein>
<feature type="signal peptide" description="Tat-type signal" evidence="3">
    <location>
        <begin position="1"/>
        <end position="26"/>
    </location>
</feature>
<feature type="chain" id="PRO_0000423664" description="Alpha-keto acid-binding periplasmic protein TakP" evidence="2">
    <location>
        <begin position="27"/>
        <end position="365"/>
    </location>
</feature>
<feature type="binding site" evidence="4">
    <location>
        <begin position="99"/>
        <end position="100"/>
    </location>
    <ligand>
        <name>substrate</name>
    </ligand>
</feature>
<feature type="binding site" evidence="4">
    <location>
        <position position="156"/>
    </location>
    <ligand>
        <name>Na(+)</name>
        <dbReference type="ChEBI" id="CHEBI:29101"/>
    </ligand>
</feature>
<feature type="binding site" evidence="4">
    <location>
        <position position="156"/>
    </location>
    <ligand>
        <name>substrate</name>
    </ligand>
</feature>
<feature type="binding site" evidence="4">
    <location>
        <position position="177"/>
    </location>
    <ligand>
        <name>substrate</name>
    </ligand>
</feature>
<feature type="binding site" evidence="4">
    <location>
        <position position="214"/>
    </location>
    <ligand>
        <name>Na(+)</name>
        <dbReference type="ChEBI" id="CHEBI:29101"/>
    </ligand>
</feature>
<feature type="binding site" evidence="4">
    <location>
        <position position="215"/>
    </location>
    <ligand>
        <name>Na(+)</name>
        <dbReference type="ChEBI" id="CHEBI:29101"/>
    </ligand>
</feature>
<feature type="binding site" evidence="4">
    <location>
        <position position="240"/>
    </location>
    <ligand>
        <name>Na(+)</name>
        <dbReference type="ChEBI" id="CHEBI:29101"/>
    </ligand>
</feature>
<feature type="strand" evidence="10">
    <location>
        <begin position="33"/>
        <end position="40"/>
    </location>
</feature>
<feature type="turn" evidence="10">
    <location>
        <begin position="45"/>
        <end position="48"/>
    </location>
</feature>
<feature type="helix" evidence="10">
    <location>
        <begin position="49"/>
        <end position="61"/>
    </location>
</feature>
<feature type="turn" evidence="10">
    <location>
        <begin position="62"/>
        <end position="64"/>
    </location>
</feature>
<feature type="strand" evidence="10">
    <location>
        <begin position="65"/>
        <end position="71"/>
    </location>
</feature>
<feature type="turn" evidence="10">
    <location>
        <begin position="73"/>
        <end position="75"/>
    </location>
</feature>
<feature type="helix" evidence="10">
    <location>
        <begin position="79"/>
        <end position="81"/>
    </location>
</feature>
<feature type="helix" evidence="10">
    <location>
        <begin position="82"/>
        <end position="87"/>
    </location>
</feature>
<feature type="strand" evidence="10">
    <location>
        <begin position="90"/>
        <end position="96"/>
    </location>
</feature>
<feature type="helix" evidence="10">
    <location>
        <begin position="98"/>
        <end position="101"/>
    </location>
</feature>
<feature type="turn" evidence="10">
    <location>
        <begin position="102"/>
        <end position="104"/>
    </location>
</feature>
<feature type="helix" evidence="10">
    <location>
        <begin position="106"/>
        <end position="109"/>
    </location>
</feature>
<feature type="turn" evidence="10">
    <location>
        <begin position="110"/>
        <end position="112"/>
    </location>
</feature>
<feature type="helix" evidence="10">
    <location>
        <begin position="120"/>
        <end position="129"/>
    </location>
</feature>
<feature type="helix" evidence="10">
    <location>
        <begin position="132"/>
        <end position="140"/>
    </location>
</feature>
<feature type="helix" evidence="10">
    <location>
        <begin position="141"/>
        <end position="143"/>
    </location>
</feature>
<feature type="strand" evidence="10">
    <location>
        <begin position="145"/>
        <end position="152"/>
    </location>
</feature>
<feature type="strand" evidence="10">
    <location>
        <begin position="160"/>
        <end position="163"/>
    </location>
</feature>
<feature type="helix" evidence="10">
    <location>
        <begin position="169"/>
        <end position="171"/>
    </location>
</feature>
<feature type="strand" evidence="10">
    <location>
        <begin position="175"/>
        <end position="177"/>
    </location>
</feature>
<feature type="helix" evidence="10">
    <location>
        <begin position="182"/>
        <end position="187"/>
    </location>
</feature>
<feature type="turn" evidence="10">
    <location>
        <begin position="188"/>
        <end position="190"/>
    </location>
</feature>
<feature type="strand" evidence="10">
    <location>
        <begin position="192"/>
        <end position="194"/>
    </location>
</feature>
<feature type="helix" evidence="9">
    <location>
        <begin position="198"/>
        <end position="200"/>
    </location>
</feature>
<feature type="helix" evidence="10">
    <location>
        <begin position="201"/>
        <end position="206"/>
    </location>
</feature>
<feature type="strand" evidence="10">
    <location>
        <begin position="211"/>
        <end position="213"/>
    </location>
</feature>
<feature type="helix" evidence="10">
    <location>
        <begin position="218"/>
        <end position="224"/>
    </location>
</feature>
<feature type="helix" evidence="10">
    <location>
        <begin position="226"/>
        <end position="228"/>
    </location>
</feature>
<feature type="strand" evidence="10">
    <location>
        <begin position="232"/>
        <end position="235"/>
    </location>
</feature>
<feature type="strand" evidence="10">
    <location>
        <begin position="244"/>
        <end position="250"/>
    </location>
</feature>
<feature type="helix" evidence="10">
    <location>
        <begin position="251"/>
        <end position="256"/>
    </location>
</feature>
<feature type="helix" evidence="10">
    <location>
        <begin position="259"/>
        <end position="293"/>
    </location>
</feature>
<feature type="strand" evidence="10">
    <location>
        <begin position="297"/>
        <end position="300"/>
    </location>
</feature>
<feature type="helix" evidence="10">
    <location>
        <begin position="303"/>
        <end position="323"/>
    </location>
</feature>
<feature type="helix" evidence="10">
    <location>
        <begin position="325"/>
        <end position="344"/>
    </location>
</feature>
<feature type="turn" evidence="10">
    <location>
        <begin position="345"/>
        <end position="347"/>
    </location>
</feature>
<feature type="helix" evidence="10">
    <location>
        <begin position="348"/>
        <end position="361"/>
    </location>
</feature>